<gene>
    <name evidence="1" type="primary">recR</name>
    <name type="ordered locus">Pnap_1672</name>
</gene>
<reference key="1">
    <citation type="journal article" date="2009" name="Environ. Microbiol.">
        <title>The genome of Polaromonas naphthalenivorans strain CJ2, isolated from coal tar-contaminated sediment, reveals physiological and metabolic versatility and evolution through extensive horizontal gene transfer.</title>
        <authorList>
            <person name="Yagi J.M."/>
            <person name="Sims D."/>
            <person name="Brettin T."/>
            <person name="Bruce D."/>
            <person name="Madsen E.L."/>
        </authorList>
    </citation>
    <scope>NUCLEOTIDE SEQUENCE [LARGE SCALE GENOMIC DNA]</scope>
    <source>
        <strain>CJ2</strain>
    </source>
</reference>
<protein>
    <recommendedName>
        <fullName evidence="1">Recombination protein RecR</fullName>
    </recommendedName>
</protein>
<organism>
    <name type="scientific">Polaromonas naphthalenivorans (strain CJ2)</name>
    <dbReference type="NCBI Taxonomy" id="365044"/>
    <lineage>
        <taxon>Bacteria</taxon>
        <taxon>Pseudomonadati</taxon>
        <taxon>Pseudomonadota</taxon>
        <taxon>Betaproteobacteria</taxon>
        <taxon>Burkholderiales</taxon>
        <taxon>Comamonadaceae</taxon>
        <taxon>Polaromonas</taxon>
    </lineage>
</organism>
<sequence length="208" mass="22394">MADSNALDGLTQALRKLPGVGAKSAARMAFHLLQHDKPGALQIARALEHAVQSIRHCALCNTLTEQEVCVTCANPQRDRSKLCVVETPADQAALERTLAYRGLYFVLMGKLSPLDGVGPNDIGLQKLFDRAVPKDEHGQPLPAASREVQEVILATNFTAEGEATAHVIAQALKSRGMQVTRLARGVPVGSELEYVDLGTIAHALTDRR</sequence>
<accession>A1VMV7</accession>
<evidence type="ECO:0000255" key="1">
    <source>
        <dbReference type="HAMAP-Rule" id="MF_00017"/>
    </source>
</evidence>
<name>RECR_POLNA</name>
<keyword id="KW-0227">DNA damage</keyword>
<keyword id="KW-0233">DNA recombination</keyword>
<keyword id="KW-0234">DNA repair</keyword>
<keyword id="KW-0479">Metal-binding</keyword>
<keyword id="KW-1185">Reference proteome</keyword>
<keyword id="KW-0862">Zinc</keyword>
<keyword id="KW-0863">Zinc-finger</keyword>
<proteinExistence type="inferred from homology"/>
<comment type="function">
    <text evidence="1">May play a role in DNA repair. It seems to be involved in an RecBC-independent recombinational process of DNA repair. It may act with RecF and RecO.</text>
</comment>
<comment type="similarity">
    <text evidence="1">Belongs to the RecR family.</text>
</comment>
<feature type="chain" id="PRO_0000322929" description="Recombination protein RecR">
    <location>
        <begin position="1"/>
        <end position="208"/>
    </location>
</feature>
<feature type="domain" description="Toprim" evidence="1">
    <location>
        <begin position="80"/>
        <end position="187"/>
    </location>
</feature>
<feature type="zinc finger region" description="C4-type" evidence="1">
    <location>
        <begin position="57"/>
        <end position="72"/>
    </location>
</feature>
<dbReference type="EMBL" id="CP000529">
    <property type="protein sequence ID" value="ABM36985.1"/>
    <property type="molecule type" value="Genomic_DNA"/>
</dbReference>
<dbReference type="RefSeq" id="WP_011801071.1">
    <property type="nucleotide sequence ID" value="NC_008781.1"/>
</dbReference>
<dbReference type="SMR" id="A1VMV7"/>
<dbReference type="STRING" id="365044.Pnap_1672"/>
<dbReference type="KEGG" id="pna:Pnap_1672"/>
<dbReference type="eggNOG" id="COG0353">
    <property type="taxonomic scope" value="Bacteria"/>
</dbReference>
<dbReference type="HOGENOM" id="CLU_060739_1_2_4"/>
<dbReference type="OrthoDB" id="9802672at2"/>
<dbReference type="Proteomes" id="UP000000644">
    <property type="component" value="Chromosome"/>
</dbReference>
<dbReference type="GO" id="GO:0003677">
    <property type="term" value="F:DNA binding"/>
    <property type="evidence" value="ECO:0007669"/>
    <property type="project" value="UniProtKB-UniRule"/>
</dbReference>
<dbReference type="GO" id="GO:0008270">
    <property type="term" value="F:zinc ion binding"/>
    <property type="evidence" value="ECO:0007669"/>
    <property type="project" value="UniProtKB-KW"/>
</dbReference>
<dbReference type="GO" id="GO:0006310">
    <property type="term" value="P:DNA recombination"/>
    <property type="evidence" value="ECO:0007669"/>
    <property type="project" value="UniProtKB-UniRule"/>
</dbReference>
<dbReference type="GO" id="GO:0006281">
    <property type="term" value="P:DNA repair"/>
    <property type="evidence" value="ECO:0007669"/>
    <property type="project" value="UniProtKB-UniRule"/>
</dbReference>
<dbReference type="CDD" id="cd01025">
    <property type="entry name" value="TOPRIM_recR"/>
    <property type="match status" value="1"/>
</dbReference>
<dbReference type="Gene3D" id="3.40.1360.10">
    <property type="match status" value="1"/>
</dbReference>
<dbReference type="Gene3D" id="6.10.250.240">
    <property type="match status" value="1"/>
</dbReference>
<dbReference type="Gene3D" id="1.10.8.420">
    <property type="entry name" value="RecR Domain 1"/>
    <property type="match status" value="1"/>
</dbReference>
<dbReference type="HAMAP" id="MF_00017">
    <property type="entry name" value="RecR"/>
    <property type="match status" value="1"/>
</dbReference>
<dbReference type="InterPro" id="IPR000093">
    <property type="entry name" value="DNA_Rcmb_RecR"/>
</dbReference>
<dbReference type="InterPro" id="IPR023627">
    <property type="entry name" value="Rcmb_RecR"/>
</dbReference>
<dbReference type="InterPro" id="IPR015967">
    <property type="entry name" value="Rcmb_RecR_Znf"/>
</dbReference>
<dbReference type="InterPro" id="IPR006171">
    <property type="entry name" value="TOPRIM_dom"/>
</dbReference>
<dbReference type="InterPro" id="IPR034137">
    <property type="entry name" value="TOPRIM_RecR"/>
</dbReference>
<dbReference type="NCBIfam" id="TIGR00615">
    <property type="entry name" value="recR"/>
    <property type="match status" value="1"/>
</dbReference>
<dbReference type="PANTHER" id="PTHR30446">
    <property type="entry name" value="RECOMBINATION PROTEIN RECR"/>
    <property type="match status" value="1"/>
</dbReference>
<dbReference type="PANTHER" id="PTHR30446:SF0">
    <property type="entry name" value="RECOMBINATION PROTEIN RECR"/>
    <property type="match status" value="1"/>
</dbReference>
<dbReference type="Pfam" id="PF21175">
    <property type="entry name" value="RecR_C"/>
    <property type="match status" value="1"/>
</dbReference>
<dbReference type="Pfam" id="PF21176">
    <property type="entry name" value="RecR_HhH"/>
    <property type="match status" value="1"/>
</dbReference>
<dbReference type="Pfam" id="PF02132">
    <property type="entry name" value="RecR_ZnF"/>
    <property type="match status" value="1"/>
</dbReference>
<dbReference type="Pfam" id="PF13662">
    <property type="entry name" value="Toprim_4"/>
    <property type="match status" value="1"/>
</dbReference>
<dbReference type="SMART" id="SM00493">
    <property type="entry name" value="TOPRIM"/>
    <property type="match status" value="1"/>
</dbReference>
<dbReference type="SUPFAM" id="SSF111304">
    <property type="entry name" value="Recombination protein RecR"/>
    <property type="match status" value="1"/>
</dbReference>
<dbReference type="PROSITE" id="PS50880">
    <property type="entry name" value="TOPRIM"/>
    <property type="match status" value="1"/>
</dbReference>